<keyword id="KW-0050">Antiport</keyword>
<keyword id="KW-1003">Cell membrane</keyword>
<keyword id="KW-0406">Ion transport</keyword>
<keyword id="KW-0472">Membrane</keyword>
<keyword id="KW-0812">Transmembrane</keyword>
<keyword id="KW-1133">Transmembrane helix</keyword>
<keyword id="KW-0813">Transport</keyword>
<dbReference type="EMBL" id="AP006716">
    <property type="protein sequence ID" value="BAE05578.1"/>
    <property type="molecule type" value="Genomic_DNA"/>
</dbReference>
<dbReference type="RefSeq" id="WP_011276528.1">
    <property type="nucleotide sequence ID" value="NC_007168.1"/>
</dbReference>
<dbReference type="SMR" id="Q4L449"/>
<dbReference type="KEGG" id="sha:SH2269"/>
<dbReference type="eggNOG" id="COG1320">
    <property type="taxonomic scope" value="Bacteria"/>
</dbReference>
<dbReference type="HOGENOM" id="CLU_121334_0_3_9"/>
<dbReference type="OrthoDB" id="9806575at2"/>
<dbReference type="Proteomes" id="UP000000543">
    <property type="component" value="Chromosome"/>
</dbReference>
<dbReference type="GO" id="GO:0005886">
    <property type="term" value="C:plasma membrane"/>
    <property type="evidence" value="ECO:0007669"/>
    <property type="project" value="UniProtKB-SubCell"/>
</dbReference>
<dbReference type="GO" id="GO:0015385">
    <property type="term" value="F:sodium:proton antiporter activity"/>
    <property type="evidence" value="ECO:0007669"/>
    <property type="project" value="TreeGrafter"/>
</dbReference>
<dbReference type="InterPro" id="IPR005133">
    <property type="entry name" value="PhaG_MnhG_YufB"/>
</dbReference>
<dbReference type="NCBIfam" id="TIGR01300">
    <property type="entry name" value="CPA3_mnhG_phaG"/>
    <property type="match status" value="1"/>
</dbReference>
<dbReference type="NCBIfam" id="NF009236">
    <property type="entry name" value="PRK12586.1"/>
    <property type="match status" value="1"/>
</dbReference>
<dbReference type="NCBIfam" id="NF009314">
    <property type="entry name" value="PRK12674.1-2"/>
    <property type="match status" value="1"/>
</dbReference>
<dbReference type="PANTHER" id="PTHR34703">
    <property type="entry name" value="ANTIPORTER SUBUNIT MNHG2-RELATED"/>
    <property type="match status" value="1"/>
</dbReference>
<dbReference type="PANTHER" id="PTHR34703:SF1">
    <property type="entry name" value="ANTIPORTER SUBUNIT MNHG2-RELATED"/>
    <property type="match status" value="1"/>
</dbReference>
<dbReference type="Pfam" id="PF03334">
    <property type="entry name" value="PhaG_MnhG_YufB"/>
    <property type="match status" value="1"/>
</dbReference>
<name>MNHG2_STAHJ</name>
<proteinExistence type="inferred from homology"/>
<reference key="1">
    <citation type="journal article" date="2005" name="J. Bacteriol.">
        <title>Whole-genome sequencing of Staphylococcus haemolyticus uncovers the extreme plasticity of its genome and the evolution of human-colonizing staphylococcal species.</title>
        <authorList>
            <person name="Takeuchi F."/>
            <person name="Watanabe S."/>
            <person name="Baba T."/>
            <person name="Yuzawa H."/>
            <person name="Ito T."/>
            <person name="Morimoto Y."/>
            <person name="Kuroda M."/>
            <person name="Cui L."/>
            <person name="Takahashi M."/>
            <person name="Ankai A."/>
            <person name="Baba S."/>
            <person name="Fukui S."/>
            <person name="Lee J.C."/>
            <person name="Hiramatsu K."/>
        </authorList>
    </citation>
    <scope>NUCLEOTIDE SEQUENCE [LARGE SCALE GENOMIC DNA]</scope>
    <source>
        <strain>JCSC1435</strain>
    </source>
</reference>
<comment type="subunit">
    <text evidence="1">May form a heterooligomeric complex that consists of seven subunits: mnhA2, mnhB2, mnhC2, mnhD2, mnhE2, mnhF2 and mnhG2.</text>
</comment>
<comment type="subcellular location">
    <subcellularLocation>
        <location evidence="4">Cell membrane</location>
        <topology evidence="4">Multi-pass membrane protein</topology>
    </subcellularLocation>
</comment>
<comment type="similarity">
    <text evidence="4">Belongs to the CPA3 antiporters (TC 2.A.63) subunit G family.</text>
</comment>
<protein>
    <recommendedName>
        <fullName>Putative antiporter subunit mnhG2</fullName>
    </recommendedName>
    <alternativeName>
        <fullName>Mrp complex subunit G2</fullName>
    </alternativeName>
    <alternativeName>
        <fullName>Putative NADH-ubiquinone oxidoreductase subunit mnhF2</fullName>
    </alternativeName>
</protein>
<gene>
    <name type="primary">mnhG2</name>
    <name type="synonym">mrpG2</name>
    <name type="ordered locus">SH2269</name>
</gene>
<accession>Q4L449</accession>
<feature type="chain" id="PRO_0000372188" description="Putative antiporter subunit mnhG2">
    <location>
        <begin position="1"/>
        <end position="171"/>
    </location>
</feature>
<feature type="transmembrane region" description="Helical" evidence="2">
    <location>
        <begin position="11"/>
        <end position="31"/>
    </location>
</feature>
<feature type="transmembrane region" description="Helical" evidence="2">
    <location>
        <begin position="51"/>
        <end position="71"/>
    </location>
</feature>
<feature type="transmembrane region" description="Helical" evidence="2">
    <location>
        <begin position="72"/>
        <end position="92"/>
    </location>
</feature>
<feature type="region of interest" description="Disordered" evidence="3">
    <location>
        <begin position="144"/>
        <end position="171"/>
    </location>
</feature>
<feature type="compositionally biased region" description="Basic and acidic residues" evidence="3">
    <location>
        <begin position="144"/>
        <end position="156"/>
    </location>
</feature>
<sequence length="171" mass="19580">MAQINEIIELIAALLIFLGSIIAVISAIGIVKFQDVFLRSHASTKSSTLSVLLTLVGVLIYFTNEQSFFSVRLLLSIVFINLTSPVGMHLVARAAYRTGAYMYRKDDAPSRSSILLSSKEYNSTEELKNRARIREERREKIYYDVQKQRQKEKQQEENIESLSEARRETKD</sequence>
<evidence type="ECO:0000250" key="1"/>
<evidence type="ECO:0000255" key="2"/>
<evidence type="ECO:0000256" key="3">
    <source>
        <dbReference type="SAM" id="MobiDB-lite"/>
    </source>
</evidence>
<evidence type="ECO:0000305" key="4"/>
<organism>
    <name type="scientific">Staphylococcus haemolyticus (strain JCSC1435)</name>
    <dbReference type="NCBI Taxonomy" id="279808"/>
    <lineage>
        <taxon>Bacteria</taxon>
        <taxon>Bacillati</taxon>
        <taxon>Bacillota</taxon>
        <taxon>Bacilli</taxon>
        <taxon>Bacillales</taxon>
        <taxon>Staphylococcaceae</taxon>
        <taxon>Staphylococcus</taxon>
    </lineage>
</organism>